<reference key="1">
    <citation type="journal article" date="2004" name="Nat. Biotechnol.">
        <title>The genome sequence of the extreme thermophile Thermus thermophilus.</title>
        <authorList>
            <person name="Henne A."/>
            <person name="Brueggemann H."/>
            <person name="Raasch C."/>
            <person name="Wiezer A."/>
            <person name="Hartsch T."/>
            <person name="Liesegang H."/>
            <person name="Johann A."/>
            <person name="Lienard T."/>
            <person name="Gohl O."/>
            <person name="Martinez-Arias R."/>
            <person name="Jacobi C."/>
            <person name="Starkuviene V."/>
            <person name="Schlenczeck S."/>
            <person name="Dencker S."/>
            <person name="Huber R."/>
            <person name="Klenk H.-P."/>
            <person name="Kramer W."/>
            <person name="Merkl R."/>
            <person name="Gottschalk G."/>
            <person name="Fritz H.-J."/>
        </authorList>
    </citation>
    <scope>NUCLEOTIDE SEQUENCE [LARGE SCALE GENOMIC DNA]</scope>
    <source>
        <strain>ATCC BAA-163 / DSM 7039 / HB27</strain>
    </source>
</reference>
<proteinExistence type="inferred from homology"/>
<evidence type="ECO:0000255" key="1">
    <source>
        <dbReference type="HAMAP-Rule" id="MF_00108"/>
    </source>
</evidence>
<dbReference type="EC" id="2.7.7.60" evidence="1"/>
<dbReference type="EMBL" id="AE017221">
    <property type="protein sequence ID" value="AAS82157.1"/>
    <property type="molecule type" value="Genomic_DNA"/>
</dbReference>
<dbReference type="RefSeq" id="WP_011174170.1">
    <property type="nucleotide sequence ID" value="NC_005835.1"/>
</dbReference>
<dbReference type="SMR" id="Q72GN3"/>
<dbReference type="GeneID" id="3169663"/>
<dbReference type="KEGG" id="tth:TT_C1815"/>
<dbReference type="eggNOG" id="COG1211">
    <property type="taxonomic scope" value="Bacteria"/>
</dbReference>
<dbReference type="HOGENOM" id="CLU_061281_2_2_0"/>
<dbReference type="OrthoDB" id="9806837at2"/>
<dbReference type="UniPathway" id="UPA00056">
    <property type="reaction ID" value="UER00093"/>
</dbReference>
<dbReference type="Proteomes" id="UP000000592">
    <property type="component" value="Chromosome"/>
</dbReference>
<dbReference type="GO" id="GO:0050518">
    <property type="term" value="F:2-C-methyl-D-erythritol 4-phosphate cytidylyltransferase activity"/>
    <property type="evidence" value="ECO:0007669"/>
    <property type="project" value="UniProtKB-UniRule"/>
</dbReference>
<dbReference type="GO" id="GO:0019288">
    <property type="term" value="P:isopentenyl diphosphate biosynthetic process, methylerythritol 4-phosphate pathway"/>
    <property type="evidence" value="ECO:0007669"/>
    <property type="project" value="UniProtKB-UniRule"/>
</dbReference>
<dbReference type="CDD" id="cd02516">
    <property type="entry name" value="CDP-ME_synthetase"/>
    <property type="match status" value="1"/>
</dbReference>
<dbReference type="Gene3D" id="3.90.550.10">
    <property type="entry name" value="Spore Coat Polysaccharide Biosynthesis Protein SpsA, Chain A"/>
    <property type="match status" value="1"/>
</dbReference>
<dbReference type="HAMAP" id="MF_00108">
    <property type="entry name" value="IspD"/>
    <property type="match status" value="1"/>
</dbReference>
<dbReference type="InterPro" id="IPR001228">
    <property type="entry name" value="IspD"/>
</dbReference>
<dbReference type="InterPro" id="IPR034683">
    <property type="entry name" value="IspD/TarI"/>
</dbReference>
<dbReference type="InterPro" id="IPR050088">
    <property type="entry name" value="IspD/TarI_cytidylyltransf_bact"/>
</dbReference>
<dbReference type="InterPro" id="IPR018294">
    <property type="entry name" value="ISPD_synthase_CS"/>
</dbReference>
<dbReference type="InterPro" id="IPR029044">
    <property type="entry name" value="Nucleotide-diphossugar_trans"/>
</dbReference>
<dbReference type="NCBIfam" id="TIGR00453">
    <property type="entry name" value="ispD"/>
    <property type="match status" value="1"/>
</dbReference>
<dbReference type="PANTHER" id="PTHR32125">
    <property type="entry name" value="2-C-METHYL-D-ERYTHRITOL 4-PHOSPHATE CYTIDYLYLTRANSFERASE, CHLOROPLASTIC"/>
    <property type="match status" value="1"/>
</dbReference>
<dbReference type="PANTHER" id="PTHR32125:SF4">
    <property type="entry name" value="2-C-METHYL-D-ERYTHRITOL 4-PHOSPHATE CYTIDYLYLTRANSFERASE, CHLOROPLASTIC"/>
    <property type="match status" value="1"/>
</dbReference>
<dbReference type="Pfam" id="PF01128">
    <property type="entry name" value="IspD"/>
    <property type="match status" value="1"/>
</dbReference>
<dbReference type="SUPFAM" id="SSF53448">
    <property type="entry name" value="Nucleotide-diphospho-sugar transferases"/>
    <property type="match status" value="1"/>
</dbReference>
<dbReference type="PROSITE" id="PS01295">
    <property type="entry name" value="ISPD"/>
    <property type="match status" value="1"/>
</dbReference>
<keyword id="KW-0414">Isoprene biosynthesis</keyword>
<keyword id="KW-0548">Nucleotidyltransferase</keyword>
<keyword id="KW-0808">Transferase</keyword>
<gene>
    <name evidence="1" type="primary">ispD</name>
    <name type="ordered locus">TT_C1815</name>
</gene>
<organism>
    <name type="scientific">Thermus thermophilus (strain ATCC BAA-163 / DSM 7039 / HB27)</name>
    <dbReference type="NCBI Taxonomy" id="262724"/>
    <lineage>
        <taxon>Bacteria</taxon>
        <taxon>Thermotogati</taxon>
        <taxon>Deinococcota</taxon>
        <taxon>Deinococci</taxon>
        <taxon>Thermales</taxon>
        <taxon>Thermaceae</taxon>
        <taxon>Thermus</taxon>
    </lineage>
</organism>
<protein>
    <recommendedName>
        <fullName evidence="1">2-C-methyl-D-erythritol 4-phosphate cytidylyltransferase</fullName>
        <ecNumber evidence="1">2.7.7.60</ecNumber>
    </recommendedName>
    <alternativeName>
        <fullName evidence="1">4-diphosphocytidyl-2C-methyl-D-erythritol synthase</fullName>
    </alternativeName>
    <alternativeName>
        <fullName evidence="1">MEP cytidylyltransferase</fullName>
        <shortName evidence="1">MCT</shortName>
    </alternativeName>
</protein>
<sequence>MEVSVLIPAAGNGLRLGRGPKAFLQVGGRTLLEWTLAAFRDAAEVLVALPPGAEPPKGLGAVFLEGGATRQASVARLLEAASLPLVLVHDVARPFVSRGLVARVLEAAQRSGAAVPVLPVPDTLMAPEGEAYGRVVPREAFRLVQTPQGFFTALLREAHAYARRKGLEASDDAQLVQALGYPVALVEGEATAFKITHPQDLVLAEALARVWSA</sequence>
<feature type="chain" id="PRO_0000075639" description="2-C-methyl-D-erythritol 4-phosphate cytidylyltransferase">
    <location>
        <begin position="1"/>
        <end position="213"/>
    </location>
</feature>
<feature type="site" description="Transition state stabilizer" evidence="1">
    <location>
        <position position="15"/>
    </location>
</feature>
<feature type="site" description="Transition state stabilizer" evidence="1">
    <location>
        <position position="21"/>
    </location>
</feature>
<feature type="site" description="Positions MEP for the nucleophilic attack" evidence="1">
    <location>
        <position position="138"/>
    </location>
</feature>
<feature type="site" description="Positions MEP for the nucleophilic attack" evidence="1">
    <location>
        <position position="194"/>
    </location>
</feature>
<name>ISPD_THET2</name>
<accession>Q72GN3</accession>
<comment type="function">
    <text evidence="1">Catalyzes the formation of 4-diphosphocytidyl-2-C-methyl-D-erythritol from CTP and 2-C-methyl-D-erythritol 4-phosphate (MEP).</text>
</comment>
<comment type="catalytic activity">
    <reaction evidence="1">
        <text>2-C-methyl-D-erythritol 4-phosphate + CTP + H(+) = 4-CDP-2-C-methyl-D-erythritol + diphosphate</text>
        <dbReference type="Rhea" id="RHEA:13429"/>
        <dbReference type="ChEBI" id="CHEBI:15378"/>
        <dbReference type="ChEBI" id="CHEBI:33019"/>
        <dbReference type="ChEBI" id="CHEBI:37563"/>
        <dbReference type="ChEBI" id="CHEBI:57823"/>
        <dbReference type="ChEBI" id="CHEBI:58262"/>
        <dbReference type="EC" id="2.7.7.60"/>
    </reaction>
</comment>
<comment type="pathway">
    <text evidence="1">Isoprenoid biosynthesis; isopentenyl diphosphate biosynthesis via DXP pathway; isopentenyl diphosphate from 1-deoxy-D-xylulose 5-phosphate: step 2/6.</text>
</comment>
<comment type="similarity">
    <text evidence="1">Belongs to the IspD/TarI cytidylyltransferase family. IspD subfamily.</text>
</comment>